<geneLocation type="chloroplast"/>
<dbReference type="EMBL" id="AJ316582">
    <property type="protein sequence ID" value="CAC88055.1"/>
    <property type="molecule type" value="Genomic_DNA"/>
</dbReference>
<dbReference type="RefSeq" id="NP_783243.1">
    <property type="nucleotide sequence ID" value="NC_004561.1"/>
</dbReference>
<dbReference type="GeneID" id="806537"/>
<dbReference type="GO" id="GO:0009535">
    <property type="term" value="C:chloroplast thylakoid membrane"/>
    <property type="evidence" value="ECO:0007669"/>
    <property type="project" value="UniProtKB-SubCell"/>
</dbReference>
<dbReference type="GO" id="GO:0009522">
    <property type="term" value="C:photosystem I"/>
    <property type="evidence" value="ECO:0007669"/>
    <property type="project" value="InterPro"/>
</dbReference>
<dbReference type="GO" id="GO:0015979">
    <property type="term" value="P:photosynthesis"/>
    <property type="evidence" value="ECO:0007669"/>
    <property type="project" value="UniProtKB-UniRule"/>
</dbReference>
<dbReference type="HAMAP" id="MF_00437">
    <property type="entry name" value="Ycf4"/>
    <property type="match status" value="1"/>
</dbReference>
<dbReference type="InterPro" id="IPR003359">
    <property type="entry name" value="PSI_Ycf4_assembly"/>
</dbReference>
<dbReference type="NCBIfam" id="NF002712">
    <property type="entry name" value="PRK02542.1"/>
    <property type="match status" value="1"/>
</dbReference>
<dbReference type="PANTHER" id="PTHR33288">
    <property type="match status" value="1"/>
</dbReference>
<dbReference type="PANTHER" id="PTHR33288:SF4">
    <property type="entry name" value="PHOTOSYSTEM I ASSEMBLY PROTEIN YCF4"/>
    <property type="match status" value="1"/>
</dbReference>
<dbReference type="Pfam" id="PF02392">
    <property type="entry name" value="Ycf4"/>
    <property type="match status" value="1"/>
</dbReference>
<proteinExistence type="inferred from homology"/>
<name>YCF4_ATRBE</name>
<reference key="1">
    <citation type="journal article" date="2002" name="Mol. Biol. Evol.">
        <title>The plastid chromosome of Atropa belladonna and its comparison with that of Nicotiana tabacum: the role of RNA editing in generating divergence in the process of plant speciation.</title>
        <authorList>
            <person name="Schmitz-Linneweber C."/>
            <person name="Regel R."/>
            <person name="Du T.G."/>
            <person name="Hupfer H."/>
            <person name="Herrmann R.G."/>
            <person name="Maier R.M."/>
        </authorList>
    </citation>
    <scope>NUCLEOTIDE SEQUENCE [LARGE SCALE GENOMIC DNA]</scope>
    <source>
        <strain>cv. Ab5p(kan)</strain>
    </source>
</reference>
<protein>
    <recommendedName>
        <fullName evidence="1">Photosystem I assembly protein Ycf4</fullName>
    </recommendedName>
</protein>
<comment type="function">
    <text evidence="1">Seems to be required for the assembly of the photosystem I complex.</text>
</comment>
<comment type="subcellular location">
    <subcellularLocation>
        <location evidence="1">Plastid</location>
        <location evidence="1">Chloroplast thylakoid membrane</location>
        <topology evidence="1">Multi-pass membrane protein</topology>
    </subcellularLocation>
</comment>
<comment type="similarity">
    <text evidence="1">Belongs to the Ycf4 family.</text>
</comment>
<feature type="chain" id="PRO_0000275647" description="Photosystem I assembly protein Ycf4">
    <location>
        <begin position="1"/>
        <end position="184"/>
    </location>
</feature>
<feature type="transmembrane region" description="Helical" evidence="1">
    <location>
        <begin position="19"/>
        <end position="39"/>
    </location>
</feature>
<feature type="transmembrane region" description="Helical" evidence="1">
    <location>
        <begin position="57"/>
        <end position="77"/>
    </location>
</feature>
<gene>
    <name evidence="1" type="primary">ycf4</name>
</gene>
<organism>
    <name type="scientific">Atropa belladonna</name>
    <name type="common">Belladonna</name>
    <name type="synonym">Deadly nightshade</name>
    <dbReference type="NCBI Taxonomy" id="33113"/>
    <lineage>
        <taxon>Eukaryota</taxon>
        <taxon>Viridiplantae</taxon>
        <taxon>Streptophyta</taxon>
        <taxon>Embryophyta</taxon>
        <taxon>Tracheophyta</taxon>
        <taxon>Spermatophyta</taxon>
        <taxon>Magnoliopsida</taxon>
        <taxon>eudicotyledons</taxon>
        <taxon>Gunneridae</taxon>
        <taxon>Pentapetalae</taxon>
        <taxon>asterids</taxon>
        <taxon>lamiids</taxon>
        <taxon>Solanales</taxon>
        <taxon>Solanaceae</taxon>
        <taxon>Solanoideae</taxon>
        <taxon>Hyoscyameae</taxon>
        <taxon>Atropa</taxon>
    </lineage>
</organism>
<keyword id="KW-0150">Chloroplast</keyword>
<keyword id="KW-0472">Membrane</keyword>
<keyword id="KW-0602">Photosynthesis</keyword>
<keyword id="KW-0934">Plastid</keyword>
<keyword id="KW-0793">Thylakoid</keyword>
<keyword id="KW-0812">Transmembrane</keyword>
<keyword id="KW-1133">Transmembrane helix</keyword>
<evidence type="ECO:0000255" key="1">
    <source>
        <dbReference type="HAMAP-Rule" id="MF_00437"/>
    </source>
</evidence>
<sequence length="184" mass="21372">MTWRSEHIWIELITGSRKISNFCWAFILFLGSLGFLLVGTSSYLGRNLISFFPTQQIVFFPQGIVMSFYGIAGLFISSYLWCTISWNVGSGYDRFDRKEGIVCIFRWGFPGKNRRIFLRFLIKDIQSVRIEVKEGISARRVLYMDIRGQGSIPLTRTDENLTPREIEQKAAELAYFLRVPIEVF</sequence>
<accession>Q8S8W6</accession>